<name>MIAA1_PARD8</name>
<protein>
    <recommendedName>
        <fullName evidence="1">tRNA dimethylallyltransferase 1</fullName>
        <ecNumber evidence="1">2.5.1.75</ecNumber>
    </recommendedName>
    <alternativeName>
        <fullName evidence="1">Dimethylallyl diphosphate:tRNA dimethylallyltransferase 1</fullName>
        <shortName evidence="1">DMAPP:tRNA dimethylallyltransferase 1</shortName>
        <shortName evidence="1">DMATase 1</shortName>
    </alternativeName>
    <alternativeName>
        <fullName evidence="1">Isopentenyl-diphosphate:tRNA isopentenyltransferase 1</fullName>
        <shortName evidence="1">IPP transferase 1</shortName>
        <shortName evidence="1">IPPT 1</shortName>
        <shortName evidence="1">IPTase 1</shortName>
    </alternativeName>
</protein>
<dbReference type="EC" id="2.5.1.75" evidence="1"/>
<dbReference type="EMBL" id="CP000140">
    <property type="protein sequence ID" value="ABR42071.1"/>
    <property type="molecule type" value="Genomic_DNA"/>
</dbReference>
<dbReference type="SMR" id="A6L8Q7"/>
<dbReference type="STRING" id="435591.BDI_0286"/>
<dbReference type="PaxDb" id="435591-BDI_0286"/>
<dbReference type="KEGG" id="pdi:BDI_0286"/>
<dbReference type="eggNOG" id="COG0324">
    <property type="taxonomic scope" value="Bacteria"/>
</dbReference>
<dbReference type="HOGENOM" id="CLU_032616_0_1_10"/>
<dbReference type="BioCyc" id="PDIS435591:G1G5A-293-MONOMER"/>
<dbReference type="Proteomes" id="UP000000566">
    <property type="component" value="Chromosome"/>
</dbReference>
<dbReference type="GO" id="GO:0005524">
    <property type="term" value="F:ATP binding"/>
    <property type="evidence" value="ECO:0007669"/>
    <property type="project" value="UniProtKB-UniRule"/>
</dbReference>
<dbReference type="GO" id="GO:0052381">
    <property type="term" value="F:tRNA dimethylallyltransferase activity"/>
    <property type="evidence" value="ECO:0007669"/>
    <property type="project" value="UniProtKB-UniRule"/>
</dbReference>
<dbReference type="GO" id="GO:0006400">
    <property type="term" value="P:tRNA modification"/>
    <property type="evidence" value="ECO:0007669"/>
    <property type="project" value="TreeGrafter"/>
</dbReference>
<dbReference type="Gene3D" id="3.40.50.300">
    <property type="entry name" value="P-loop containing nucleotide triphosphate hydrolases"/>
    <property type="match status" value="1"/>
</dbReference>
<dbReference type="HAMAP" id="MF_00185">
    <property type="entry name" value="IPP_trans"/>
    <property type="match status" value="1"/>
</dbReference>
<dbReference type="InterPro" id="IPR039657">
    <property type="entry name" value="Dimethylallyltransferase"/>
</dbReference>
<dbReference type="InterPro" id="IPR018022">
    <property type="entry name" value="IPT"/>
</dbReference>
<dbReference type="InterPro" id="IPR027417">
    <property type="entry name" value="P-loop_NTPase"/>
</dbReference>
<dbReference type="NCBIfam" id="TIGR00174">
    <property type="entry name" value="miaA"/>
    <property type="match status" value="1"/>
</dbReference>
<dbReference type="PANTHER" id="PTHR11088">
    <property type="entry name" value="TRNA DIMETHYLALLYLTRANSFERASE"/>
    <property type="match status" value="1"/>
</dbReference>
<dbReference type="PANTHER" id="PTHR11088:SF60">
    <property type="entry name" value="TRNA DIMETHYLALLYLTRANSFERASE"/>
    <property type="match status" value="1"/>
</dbReference>
<dbReference type="Pfam" id="PF01715">
    <property type="entry name" value="IPPT"/>
    <property type="match status" value="1"/>
</dbReference>
<dbReference type="SUPFAM" id="SSF52540">
    <property type="entry name" value="P-loop containing nucleoside triphosphate hydrolases"/>
    <property type="match status" value="2"/>
</dbReference>
<reference key="1">
    <citation type="journal article" date="2007" name="PLoS Biol.">
        <title>Evolution of symbiotic bacteria in the distal human intestine.</title>
        <authorList>
            <person name="Xu J."/>
            <person name="Mahowald M.A."/>
            <person name="Ley R.E."/>
            <person name="Lozupone C.A."/>
            <person name="Hamady M."/>
            <person name="Martens E.C."/>
            <person name="Henrissat B."/>
            <person name="Coutinho P.M."/>
            <person name="Minx P."/>
            <person name="Latreille P."/>
            <person name="Cordum H."/>
            <person name="Van Brunt A."/>
            <person name="Kim K."/>
            <person name="Fulton R.S."/>
            <person name="Fulton L.A."/>
            <person name="Clifton S.W."/>
            <person name="Wilson R.K."/>
            <person name="Knight R.D."/>
            <person name="Gordon J.I."/>
        </authorList>
    </citation>
    <scope>NUCLEOTIDE SEQUENCE [LARGE SCALE GENOMIC DNA]</scope>
    <source>
        <strain>ATCC 8503 / DSM 20701 / CIP 104284 / JCM 5825 / NCTC 11152</strain>
    </source>
</reference>
<accession>A6L8Q7</accession>
<comment type="function">
    <text evidence="1">Catalyzes the transfer of a dimethylallyl group onto the adenine at position 37 in tRNAs that read codons beginning with uridine, leading to the formation of N6-(dimethylallyl)adenosine (i(6)A).</text>
</comment>
<comment type="catalytic activity">
    <reaction evidence="1">
        <text>adenosine(37) in tRNA + dimethylallyl diphosphate = N(6)-dimethylallyladenosine(37) in tRNA + diphosphate</text>
        <dbReference type="Rhea" id="RHEA:26482"/>
        <dbReference type="Rhea" id="RHEA-COMP:10162"/>
        <dbReference type="Rhea" id="RHEA-COMP:10375"/>
        <dbReference type="ChEBI" id="CHEBI:33019"/>
        <dbReference type="ChEBI" id="CHEBI:57623"/>
        <dbReference type="ChEBI" id="CHEBI:74411"/>
        <dbReference type="ChEBI" id="CHEBI:74415"/>
        <dbReference type="EC" id="2.5.1.75"/>
    </reaction>
</comment>
<comment type="cofactor">
    <cofactor evidence="1">
        <name>Mg(2+)</name>
        <dbReference type="ChEBI" id="CHEBI:18420"/>
    </cofactor>
</comment>
<comment type="subunit">
    <text evidence="1">Monomer.</text>
</comment>
<comment type="similarity">
    <text evidence="1">Belongs to the IPP transferase family.</text>
</comment>
<feature type="chain" id="PRO_0000377250" description="tRNA dimethylallyltransferase 1">
    <location>
        <begin position="1"/>
        <end position="307"/>
    </location>
</feature>
<feature type="region of interest" description="Interaction with substrate tRNA" evidence="1">
    <location>
        <begin position="36"/>
        <end position="39"/>
    </location>
</feature>
<feature type="region of interest" description="Interaction with substrate tRNA" evidence="1">
    <location>
        <begin position="159"/>
        <end position="163"/>
    </location>
</feature>
<feature type="binding site" evidence="1">
    <location>
        <begin position="11"/>
        <end position="18"/>
    </location>
    <ligand>
        <name>ATP</name>
        <dbReference type="ChEBI" id="CHEBI:30616"/>
    </ligand>
</feature>
<feature type="binding site" evidence="1">
    <location>
        <begin position="13"/>
        <end position="18"/>
    </location>
    <ligand>
        <name>substrate</name>
    </ligand>
</feature>
<feature type="site" description="Interaction with substrate tRNA" evidence="1">
    <location>
        <position position="105"/>
    </location>
</feature>
<evidence type="ECO:0000255" key="1">
    <source>
        <dbReference type="HAMAP-Rule" id="MF_00185"/>
    </source>
</evidence>
<sequence length="307" mass="35576">MKSYELITILGPTASGKTTFAAALAAQLDTEIISADSRQIYRSMDIGTGKDLADYNVNGKQIPYHLIDICEPGYKYNVFEYQHDFFRVYEDMKRRGKLPILCGGTGMYIEAVLKGYKLLDVPQNPELRESLRNKTLEELETILASYKILHNKTDVDTAQRAIRAIEIEEYYKTQAPDVNEYNPINSLIIGIHIDRELRREKISRRLRTRLDEGMVDEVRTILATGVKPEDLIYYGLEYKFLTLYIIGELSFEEMVSQLEIAIHQFAKRQMTWFRGMERRGCEIHWIDATLPTEEKIATTMRILNNQL</sequence>
<proteinExistence type="inferred from homology"/>
<keyword id="KW-0067">ATP-binding</keyword>
<keyword id="KW-0460">Magnesium</keyword>
<keyword id="KW-0547">Nucleotide-binding</keyword>
<keyword id="KW-1185">Reference proteome</keyword>
<keyword id="KW-0808">Transferase</keyword>
<keyword id="KW-0819">tRNA processing</keyword>
<organism>
    <name type="scientific">Parabacteroides distasonis (strain ATCC 8503 / DSM 20701 / CIP 104284 / JCM 5825 / NCTC 11152)</name>
    <dbReference type="NCBI Taxonomy" id="435591"/>
    <lineage>
        <taxon>Bacteria</taxon>
        <taxon>Pseudomonadati</taxon>
        <taxon>Bacteroidota</taxon>
        <taxon>Bacteroidia</taxon>
        <taxon>Bacteroidales</taxon>
        <taxon>Tannerellaceae</taxon>
        <taxon>Parabacteroides</taxon>
    </lineage>
</organism>
<gene>
    <name evidence="1" type="primary">miaA1</name>
    <name type="ordered locus">BDI_0286</name>
</gene>